<sequence length="351" mass="37945">MSSANIPATQSALIFEKYGGPLEVRQVSVPQPQENELLVKIEYSGICHSDLHTWEGDFEYASICPLIGGHEGAGTVVTIGSKVKGWNIGDRAGIKLINANCLNCEYCKTGHEPLCDHIQNYGIDRHGTFQEYLTIRDIDAIKVSNDTNLAAAAPVLCGGVTAYKSLKATNVKPGQIVVLTGAGGGLGSFGIQYAKAMGMRVVAVDHISKEDHCRNLGAEWFVDAFDTPDIVAHIRKLTNGGAHGVVSFAAAKKPMEYALEYVRKRGTVVFVGLPKDGTIPLDTLSLICNEITVKGSIVGSRMDVDEAIDFITRGIVHVPIELVKLEDVPSVYQRMKDGKVTSRVVVDFSMR</sequence>
<feature type="chain" id="PRO_0000160694" description="Alcohol dehydrogenase 2">
    <location>
        <begin position="1"/>
        <end position="351"/>
    </location>
</feature>
<feature type="binding site" evidence="1">
    <location>
        <position position="47"/>
    </location>
    <ligand>
        <name>Zn(2+)</name>
        <dbReference type="ChEBI" id="CHEBI:29105"/>
        <label>1</label>
        <note>catalytic</note>
    </ligand>
</feature>
<feature type="binding site" evidence="1">
    <location>
        <position position="70"/>
    </location>
    <ligand>
        <name>Zn(2+)</name>
        <dbReference type="ChEBI" id="CHEBI:29105"/>
        <label>1</label>
        <note>catalytic</note>
    </ligand>
</feature>
<feature type="binding site" evidence="1">
    <location>
        <position position="101"/>
    </location>
    <ligand>
        <name>Zn(2+)</name>
        <dbReference type="ChEBI" id="CHEBI:29105"/>
        <label>2</label>
    </ligand>
</feature>
<feature type="binding site" evidence="1">
    <location>
        <position position="104"/>
    </location>
    <ligand>
        <name>Zn(2+)</name>
        <dbReference type="ChEBI" id="CHEBI:29105"/>
        <label>2</label>
    </ligand>
</feature>
<feature type="binding site" evidence="1">
    <location>
        <position position="107"/>
    </location>
    <ligand>
        <name>Zn(2+)</name>
        <dbReference type="ChEBI" id="CHEBI:29105"/>
        <label>2</label>
    </ligand>
</feature>
<feature type="binding site" evidence="1">
    <location>
        <position position="115"/>
    </location>
    <ligand>
        <name>Zn(2+)</name>
        <dbReference type="ChEBI" id="CHEBI:29105"/>
        <label>2</label>
    </ligand>
</feature>
<feature type="binding site" evidence="1">
    <location>
        <position position="157"/>
    </location>
    <ligand>
        <name>Zn(2+)</name>
        <dbReference type="ChEBI" id="CHEBI:29105"/>
        <label>1</label>
        <note>catalytic</note>
    </ligand>
</feature>
<feature type="binding site" evidence="1">
    <location>
        <begin position="181"/>
        <end position="187"/>
    </location>
    <ligand>
        <name>NAD(+)</name>
        <dbReference type="ChEBI" id="CHEBI:57540"/>
    </ligand>
</feature>
<feature type="binding site" evidence="1">
    <location>
        <position position="205"/>
    </location>
    <ligand>
        <name>NAD(+)</name>
        <dbReference type="ChEBI" id="CHEBI:57540"/>
    </ligand>
</feature>
<feature type="binding site" evidence="1">
    <location>
        <position position="209"/>
    </location>
    <ligand>
        <name>NAD(+)</name>
        <dbReference type="ChEBI" id="CHEBI:57540"/>
    </ligand>
</feature>
<feature type="binding site" evidence="1">
    <location>
        <begin position="271"/>
        <end position="273"/>
    </location>
    <ligand>
        <name>NAD(+)</name>
        <dbReference type="ChEBI" id="CHEBI:57540"/>
    </ligand>
</feature>
<feature type="binding site" evidence="1">
    <location>
        <position position="343"/>
    </location>
    <ligand>
        <name>NAD(+)</name>
        <dbReference type="ChEBI" id="CHEBI:57540"/>
    </ligand>
</feature>
<comment type="catalytic activity">
    <reaction>
        <text>a primary alcohol + NAD(+) = an aldehyde + NADH + H(+)</text>
        <dbReference type="Rhea" id="RHEA:10736"/>
        <dbReference type="ChEBI" id="CHEBI:15378"/>
        <dbReference type="ChEBI" id="CHEBI:15734"/>
        <dbReference type="ChEBI" id="CHEBI:17478"/>
        <dbReference type="ChEBI" id="CHEBI:57540"/>
        <dbReference type="ChEBI" id="CHEBI:57945"/>
        <dbReference type="EC" id="1.1.1.1"/>
    </reaction>
</comment>
<comment type="catalytic activity">
    <reaction>
        <text>a secondary alcohol + NAD(+) = a ketone + NADH + H(+)</text>
        <dbReference type="Rhea" id="RHEA:10740"/>
        <dbReference type="ChEBI" id="CHEBI:15378"/>
        <dbReference type="ChEBI" id="CHEBI:17087"/>
        <dbReference type="ChEBI" id="CHEBI:35681"/>
        <dbReference type="ChEBI" id="CHEBI:57540"/>
        <dbReference type="ChEBI" id="CHEBI:57945"/>
        <dbReference type="EC" id="1.1.1.1"/>
    </reaction>
</comment>
<comment type="cofactor">
    <cofactor evidence="1">
        <name>Zn(2+)</name>
        <dbReference type="ChEBI" id="CHEBI:29105"/>
    </cofactor>
    <text evidence="1">Binds 2 Zn(2+) ions per subunit.</text>
</comment>
<comment type="subunit">
    <text evidence="2">Homotetramer.</text>
</comment>
<comment type="similarity">
    <text evidence="2">Belongs to the zinc-containing alcohol dehydrogenase family.</text>
</comment>
<proteinExistence type="inferred from homology"/>
<organism>
    <name type="scientific">Caenorhabditis elegans</name>
    <dbReference type="NCBI Taxonomy" id="6239"/>
    <lineage>
        <taxon>Eukaryota</taxon>
        <taxon>Metazoa</taxon>
        <taxon>Ecdysozoa</taxon>
        <taxon>Nematoda</taxon>
        <taxon>Chromadorea</taxon>
        <taxon>Rhabditida</taxon>
        <taxon>Rhabditina</taxon>
        <taxon>Rhabditomorpha</taxon>
        <taxon>Rhabditoidea</taxon>
        <taxon>Rhabditidae</taxon>
        <taxon>Peloderinae</taxon>
        <taxon>Caenorhabditis</taxon>
    </lineage>
</organism>
<name>ADH2_CAEEL</name>
<evidence type="ECO:0000250" key="1"/>
<evidence type="ECO:0000305" key="2"/>
<reference key="1">
    <citation type="journal article" date="1998" name="Science">
        <title>Genome sequence of the nematode C. elegans: a platform for investigating biology.</title>
        <authorList>
            <consortium name="The C. elegans sequencing consortium"/>
        </authorList>
    </citation>
    <scope>NUCLEOTIDE SEQUENCE [LARGE SCALE GENOMIC DNA]</scope>
    <source>
        <strain>Bristol N2</strain>
    </source>
</reference>
<keyword id="KW-0479">Metal-binding</keyword>
<keyword id="KW-0520">NAD</keyword>
<keyword id="KW-0560">Oxidoreductase</keyword>
<keyword id="KW-1185">Reference proteome</keyword>
<keyword id="KW-0862">Zinc</keyword>
<gene>
    <name type="primary">sodh-2</name>
    <name type="ORF">K12G11.4</name>
</gene>
<dbReference type="EC" id="1.1.1.1"/>
<dbReference type="EMBL" id="Z81570">
    <property type="protein sequence ID" value="CAB04603.1"/>
    <property type="molecule type" value="Genomic_DNA"/>
</dbReference>
<dbReference type="PIR" id="T23625">
    <property type="entry name" value="T23625"/>
</dbReference>
<dbReference type="RefSeq" id="NP_505992.1">
    <property type="nucleotide sequence ID" value="NM_073591.5"/>
</dbReference>
<dbReference type="SMR" id="O45687"/>
<dbReference type="BioGRID" id="44652">
    <property type="interactions" value="2"/>
</dbReference>
<dbReference type="FunCoup" id="O45687">
    <property type="interactions" value="269"/>
</dbReference>
<dbReference type="IntAct" id="O45687">
    <property type="interactions" value="1"/>
</dbReference>
<dbReference type="STRING" id="6239.K12G11.4.1"/>
<dbReference type="PaxDb" id="6239-K12G11.4"/>
<dbReference type="PeptideAtlas" id="O45687"/>
<dbReference type="EnsemblMetazoa" id="K12G11.4.1">
    <property type="protein sequence ID" value="K12G11.4.1"/>
    <property type="gene ID" value="WBGene00010791"/>
</dbReference>
<dbReference type="GeneID" id="179628"/>
<dbReference type="KEGG" id="cel:CELE_K12G11.4"/>
<dbReference type="UCSC" id="K12G11.4">
    <property type="organism name" value="c. elegans"/>
</dbReference>
<dbReference type="AGR" id="WB:WBGene00010791"/>
<dbReference type="CTD" id="179628"/>
<dbReference type="WormBase" id="K12G11.4">
    <property type="protein sequence ID" value="CE12214"/>
    <property type="gene ID" value="WBGene00010791"/>
    <property type="gene designation" value="sodh-2"/>
</dbReference>
<dbReference type="eggNOG" id="KOG0023">
    <property type="taxonomic scope" value="Eukaryota"/>
</dbReference>
<dbReference type="GeneTree" id="ENSGT00940000171159"/>
<dbReference type="HOGENOM" id="CLU_026673_20_1_1"/>
<dbReference type="InParanoid" id="O45687"/>
<dbReference type="OMA" id="EAIFPMV"/>
<dbReference type="OrthoDB" id="1879366at2759"/>
<dbReference type="PhylomeDB" id="O45687"/>
<dbReference type="PRO" id="PR:O45687"/>
<dbReference type="Proteomes" id="UP000001940">
    <property type="component" value="Chromosome V"/>
</dbReference>
<dbReference type="Bgee" id="WBGene00010791">
    <property type="expression patterns" value="Expressed in embryo and 2 other cell types or tissues"/>
</dbReference>
<dbReference type="GO" id="GO:0005737">
    <property type="term" value="C:cytoplasm"/>
    <property type="evidence" value="ECO:0000318"/>
    <property type="project" value="GO_Central"/>
</dbReference>
<dbReference type="GO" id="GO:0004022">
    <property type="term" value="F:alcohol dehydrogenase (NAD+) activity"/>
    <property type="evidence" value="ECO:0000318"/>
    <property type="project" value="GO_Central"/>
</dbReference>
<dbReference type="GO" id="GO:0008270">
    <property type="term" value="F:zinc ion binding"/>
    <property type="evidence" value="ECO:0007669"/>
    <property type="project" value="InterPro"/>
</dbReference>
<dbReference type="CDD" id="cd08297">
    <property type="entry name" value="CAD3"/>
    <property type="match status" value="1"/>
</dbReference>
<dbReference type="FunFam" id="3.40.50.720:FF:000039">
    <property type="entry name" value="Alcohol dehydrogenase AdhP"/>
    <property type="match status" value="1"/>
</dbReference>
<dbReference type="Gene3D" id="3.90.180.10">
    <property type="entry name" value="Medium-chain alcohol dehydrogenases, catalytic domain"/>
    <property type="match status" value="1"/>
</dbReference>
<dbReference type="Gene3D" id="3.40.50.720">
    <property type="entry name" value="NAD(P)-binding Rossmann-like Domain"/>
    <property type="match status" value="1"/>
</dbReference>
<dbReference type="InterPro" id="IPR013149">
    <property type="entry name" value="ADH-like_C"/>
</dbReference>
<dbReference type="InterPro" id="IPR013154">
    <property type="entry name" value="ADH-like_N"/>
</dbReference>
<dbReference type="InterPro" id="IPR002328">
    <property type="entry name" value="ADH_Zn_CS"/>
</dbReference>
<dbReference type="InterPro" id="IPR011032">
    <property type="entry name" value="GroES-like_sf"/>
</dbReference>
<dbReference type="InterPro" id="IPR036291">
    <property type="entry name" value="NAD(P)-bd_dom_sf"/>
</dbReference>
<dbReference type="InterPro" id="IPR020843">
    <property type="entry name" value="PKS_ER"/>
</dbReference>
<dbReference type="PANTHER" id="PTHR42940">
    <property type="entry name" value="ALCOHOL DEHYDROGENASE 1-RELATED"/>
    <property type="match status" value="1"/>
</dbReference>
<dbReference type="PANTHER" id="PTHR42940:SF3">
    <property type="entry name" value="ALCOHOL DEHYDROGENASE 1-RELATED"/>
    <property type="match status" value="1"/>
</dbReference>
<dbReference type="Pfam" id="PF08240">
    <property type="entry name" value="ADH_N"/>
    <property type="match status" value="1"/>
</dbReference>
<dbReference type="Pfam" id="PF00107">
    <property type="entry name" value="ADH_zinc_N"/>
    <property type="match status" value="1"/>
</dbReference>
<dbReference type="SMART" id="SM00829">
    <property type="entry name" value="PKS_ER"/>
    <property type="match status" value="1"/>
</dbReference>
<dbReference type="SUPFAM" id="SSF50129">
    <property type="entry name" value="GroES-like"/>
    <property type="match status" value="1"/>
</dbReference>
<dbReference type="SUPFAM" id="SSF51735">
    <property type="entry name" value="NAD(P)-binding Rossmann-fold domains"/>
    <property type="match status" value="1"/>
</dbReference>
<dbReference type="PROSITE" id="PS00059">
    <property type="entry name" value="ADH_ZINC"/>
    <property type="match status" value="1"/>
</dbReference>
<protein>
    <recommendedName>
        <fullName>Alcohol dehydrogenase 2</fullName>
        <ecNumber>1.1.1.1</ecNumber>
    </recommendedName>
    <alternativeName>
        <fullName>Sorbitol dehydrogenase family protein 2</fullName>
    </alternativeName>
</protein>
<accession>O45687</accession>